<proteinExistence type="inferred from homology"/>
<reference key="1">
    <citation type="submission" date="2004-10" db="EMBL/GenBank/DDBJ databases">
        <authorList>
            <consortium name="NIH - Xenopus Gene Collection (XGC) project"/>
        </authorList>
    </citation>
    <scope>NUCLEOTIDE SEQUENCE [LARGE SCALE MRNA]</scope>
    <source>
        <tissue>Embryo</tissue>
    </source>
</reference>
<gene>
    <name evidence="1" type="primary">dda1</name>
</gene>
<keyword id="KW-1185">Reference proteome</keyword>
<keyword id="KW-0833">Ubl conjugation pathway</keyword>
<protein>
    <recommendedName>
        <fullName evidence="1">DET1- and DDB1-associated protein 1</fullName>
    </recommendedName>
</protein>
<accession>Q5U550</accession>
<evidence type="ECO:0000250" key="1">
    <source>
        <dbReference type="UniProtKB" id="Q9BW61"/>
    </source>
</evidence>
<evidence type="ECO:0000256" key="2">
    <source>
        <dbReference type="SAM" id="MobiDB-lite"/>
    </source>
</evidence>
<evidence type="ECO:0000305" key="3"/>
<sequence length="101" mass="11743">MADFLKGLPVYNESNFSRFHADSVCKASNRRPSVYLPTREYPSDQIIVTEKTNILLRYLHQQWDKKNAAKKRDQDQLEIGETSAPPRKIARTDSQEMNEDT</sequence>
<comment type="function">
    <text evidence="1">Functions as a component of numerous distinct DCX (DDB1-CUL4-X-box) E3 ubiquitin-protein ligase complexes which mediate the ubiquitination and subsequent proteasomal degradation of target proteins. In the DCX complexes, acts as a scaffolding subunit required to stabilize the complex.</text>
</comment>
<comment type="pathway">
    <text evidence="1">Protein modification; protein ubiquitination.</text>
</comment>
<comment type="subunit">
    <text evidence="1">Component of numerous DCX (DDB1-CUL4-X-box) E3 ubiquitin-protein ligase complexes which consist of a core of DDB1, cullin-4 (CUL4A or CUL4B), DDA1 and RBX1.</text>
</comment>
<comment type="similarity">
    <text evidence="3">Belongs to the DDA1 family.</text>
</comment>
<organism>
    <name type="scientific">Xenopus laevis</name>
    <name type="common">African clawed frog</name>
    <dbReference type="NCBI Taxonomy" id="8355"/>
    <lineage>
        <taxon>Eukaryota</taxon>
        <taxon>Metazoa</taxon>
        <taxon>Chordata</taxon>
        <taxon>Craniata</taxon>
        <taxon>Vertebrata</taxon>
        <taxon>Euteleostomi</taxon>
        <taxon>Amphibia</taxon>
        <taxon>Batrachia</taxon>
        <taxon>Anura</taxon>
        <taxon>Pipoidea</taxon>
        <taxon>Pipidae</taxon>
        <taxon>Xenopodinae</taxon>
        <taxon>Xenopus</taxon>
        <taxon>Xenopus</taxon>
    </lineage>
</organism>
<name>DDA1_XENLA</name>
<feature type="chain" id="PRO_0000310275" description="DET1- and DDB1-associated protein 1">
    <location>
        <begin position="1"/>
        <end position="101"/>
    </location>
</feature>
<feature type="region of interest" description="Disordered" evidence="2">
    <location>
        <begin position="67"/>
        <end position="101"/>
    </location>
</feature>
<dbReference type="EMBL" id="BC084834">
    <property type="protein sequence ID" value="AAH84834.1"/>
    <property type="molecule type" value="mRNA"/>
</dbReference>
<dbReference type="RefSeq" id="NP_001088502.1">
    <property type="nucleotide sequence ID" value="NM_001095033.1"/>
</dbReference>
<dbReference type="SMR" id="Q5U550"/>
<dbReference type="DNASU" id="495370"/>
<dbReference type="GeneID" id="495370"/>
<dbReference type="KEGG" id="xla:495370"/>
<dbReference type="AGR" id="Xenbase:XB-GENE-6078316"/>
<dbReference type="CTD" id="79016"/>
<dbReference type="Xenbase" id="XB-GENE-6078316">
    <property type="gene designation" value="dda1.L"/>
</dbReference>
<dbReference type="OrthoDB" id="8598182at2759"/>
<dbReference type="UniPathway" id="UPA00143"/>
<dbReference type="Proteomes" id="UP000186698">
    <property type="component" value="Chromosome 1L"/>
</dbReference>
<dbReference type="Bgee" id="495370">
    <property type="expression patterns" value="Expressed in egg cell and 19 other cell types or tissues"/>
</dbReference>
<dbReference type="GO" id="GO:0080008">
    <property type="term" value="C:Cul4-RING E3 ubiquitin ligase complex"/>
    <property type="evidence" value="ECO:0000250"/>
    <property type="project" value="UniProtKB"/>
</dbReference>
<dbReference type="GO" id="GO:0032436">
    <property type="term" value="P:positive regulation of proteasomal ubiquitin-dependent protein catabolic process"/>
    <property type="evidence" value="ECO:0000318"/>
    <property type="project" value="GO_Central"/>
</dbReference>
<dbReference type="GO" id="GO:0000209">
    <property type="term" value="P:protein polyubiquitination"/>
    <property type="evidence" value="ECO:0000250"/>
    <property type="project" value="UniProtKB"/>
</dbReference>
<dbReference type="InterPro" id="IPR033575">
    <property type="entry name" value="DDA1-like"/>
</dbReference>
<dbReference type="InterPro" id="IPR018276">
    <property type="entry name" value="DDA1_dom"/>
</dbReference>
<dbReference type="PANTHER" id="PTHR31879">
    <property type="entry name" value="DET1- AND DDB1-ASSOCIATED PROTEIN 1"/>
    <property type="match status" value="1"/>
</dbReference>
<dbReference type="PANTHER" id="PTHR31879:SF2">
    <property type="entry name" value="DET1- AND DDB1-ASSOCIATED PROTEIN 1"/>
    <property type="match status" value="1"/>
</dbReference>
<dbReference type="Pfam" id="PF10172">
    <property type="entry name" value="DDA1"/>
    <property type="match status" value="1"/>
</dbReference>